<keyword id="KW-0067">ATP-binding</keyword>
<keyword id="KW-0133">Cell shape</keyword>
<keyword id="KW-0961">Cell wall biogenesis/degradation</keyword>
<keyword id="KW-0963">Cytoplasm</keyword>
<keyword id="KW-0436">Ligase</keyword>
<keyword id="KW-0460">Magnesium</keyword>
<keyword id="KW-0464">Manganese</keyword>
<keyword id="KW-0479">Metal-binding</keyword>
<keyword id="KW-0547">Nucleotide-binding</keyword>
<keyword id="KW-0573">Peptidoglycan synthesis</keyword>
<evidence type="ECO:0000250" key="1"/>
<evidence type="ECO:0000255" key="2">
    <source>
        <dbReference type="HAMAP-Rule" id="MF_00047"/>
    </source>
</evidence>
<protein>
    <recommendedName>
        <fullName evidence="2">D-alanine--D-alanine ligase</fullName>
        <ecNumber evidence="2">6.3.2.4</ecNumber>
    </recommendedName>
    <alternativeName>
        <fullName evidence="2">D-Ala-D-Ala ligase</fullName>
    </alternativeName>
    <alternativeName>
        <fullName evidence="2">D-alanylalanine synthetase</fullName>
    </alternativeName>
</protein>
<organism>
    <name type="scientific">Mycobacterium sp. (strain MCS)</name>
    <dbReference type="NCBI Taxonomy" id="164756"/>
    <lineage>
        <taxon>Bacteria</taxon>
        <taxon>Bacillati</taxon>
        <taxon>Actinomycetota</taxon>
        <taxon>Actinomycetes</taxon>
        <taxon>Mycobacteriales</taxon>
        <taxon>Mycobacteriaceae</taxon>
        <taxon>Mycobacterium</taxon>
    </lineage>
</organism>
<sequence length="371" mass="39213">MIARNQRTRVAVVYGGRSSEHAISCVSAGSILRNLDPERFDVVAVGITPDGSWVLTDGRPETLAITDGRLPEVSAESGTALALPADPGRRGELVSLSPAAAGEVLAAVDVVFPVLHGPYGEDGTIQGLLELAGVPYVGAGVLASAAGMDKEFTKKLLVAEGLPVGDHVVLRPGRANVTLDERERLGLPVFVKPARGGSSIGVSRVSDWAELPAAIEAARRHDPKVIVEAGIAGRELECGVLEYPDGRVDASTIGEIRVAGVRGREDGFYDFATKYLDDGAELDVPAKVEDDVADEIRRLAIRAFRAIDCQGLARVDFFLTDDGPVVNEINTMPGFTTISMYPRMWAASGVDYPTLLAAMVDTAVARGTGLR</sequence>
<comment type="function">
    <text evidence="2">Cell wall formation.</text>
</comment>
<comment type="catalytic activity">
    <reaction evidence="2">
        <text>2 D-alanine + ATP = D-alanyl-D-alanine + ADP + phosphate + H(+)</text>
        <dbReference type="Rhea" id="RHEA:11224"/>
        <dbReference type="ChEBI" id="CHEBI:15378"/>
        <dbReference type="ChEBI" id="CHEBI:30616"/>
        <dbReference type="ChEBI" id="CHEBI:43474"/>
        <dbReference type="ChEBI" id="CHEBI:57416"/>
        <dbReference type="ChEBI" id="CHEBI:57822"/>
        <dbReference type="ChEBI" id="CHEBI:456216"/>
        <dbReference type="EC" id="6.3.2.4"/>
    </reaction>
</comment>
<comment type="cofactor">
    <cofactor evidence="1">
        <name>Mg(2+)</name>
        <dbReference type="ChEBI" id="CHEBI:18420"/>
    </cofactor>
    <cofactor evidence="1">
        <name>Mn(2+)</name>
        <dbReference type="ChEBI" id="CHEBI:29035"/>
    </cofactor>
    <text evidence="1">Binds 2 magnesium or manganese ions per subunit.</text>
</comment>
<comment type="pathway">
    <text evidence="2">Cell wall biogenesis; peptidoglycan biosynthesis.</text>
</comment>
<comment type="subcellular location">
    <subcellularLocation>
        <location evidence="2">Cytoplasm</location>
    </subcellularLocation>
</comment>
<comment type="similarity">
    <text evidence="2">Belongs to the D-alanine--D-alanine ligase family.</text>
</comment>
<proteinExistence type="inferred from homology"/>
<name>DDL_MYCSS</name>
<feature type="chain" id="PRO_1000057327" description="D-alanine--D-alanine ligase">
    <location>
        <begin position="1"/>
        <end position="371"/>
    </location>
</feature>
<feature type="domain" description="ATP-grasp" evidence="2">
    <location>
        <begin position="154"/>
        <end position="361"/>
    </location>
</feature>
<feature type="binding site" evidence="2">
    <location>
        <begin position="182"/>
        <end position="237"/>
    </location>
    <ligand>
        <name>ATP</name>
        <dbReference type="ChEBI" id="CHEBI:30616"/>
    </ligand>
</feature>
<feature type="binding site" evidence="2">
    <location>
        <position position="316"/>
    </location>
    <ligand>
        <name>Mg(2+)</name>
        <dbReference type="ChEBI" id="CHEBI:18420"/>
        <label>1</label>
    </ligand>
</feature>
<feature type="binding site" evidence="2">
    <location>
        <position position="328"/>
    </location>
    <ligand>
        <name>Mg(2+)</name>
        <dbReference type="ChEBI" id="CHEBI:18420"/>
        <label>1</label>
    </ligand>
</feature>
<feature type="binding site" evidence="2">
    <location>
        <position position="328"/>
    </location>
    <ligand>
        <name>Mg(2+)</name>
        <dbReference type="ChEBI" id="CHEBI:18420"/>
        <label>2</label>
    </ligand>
</feature>
<feature type="binding site" evidence="2">
    <location>
        <position position="330"/>
    </location>
    <ligand>
        <name>Mg(2+)</name>
        <dbReference type="ChEBI" id="CHEBI:18420"/>
        <label>2</label>
    </ligand>
</feature>
<dbReference type="EC" id="6.3.2.4" evidence="2"/>
<dbReference type="EMBL" id="CP000384">
    <property type="protein sequence ID" value="ABG08038.1"/>
    <property type="molecule type" value="Genomic_DNA"/>
</dbReference>
<dbReference type="SMR" id="Q1BAP6"/>
<dbReference type="KEGG" id="mmc:Mmcs_1929"/>
<dbReference type="HOGENOM" id="CLU_039268_0_1_11"/>
<dbReference type="BioCyc" id="MSP164756:G1G6O-1973-MONOMER"/>
<dbReference type="UniPathway" id="UPA00219"/>
<dbReference type="GO" id="GO:0005829">
    <property type="term" value="C:cytosol"/>
    <property type="evidence" value="ECO:0007669"/>
    <property type="project" value="TreeGrafter"/>
</dbReference>
<dbReference type="GO" id="GO:0005524">
    <property type="term" value="F:ATP binding"/>
    <property type="evidence" value="ECO:0007669"/>
    <property type="project" value="UniProtKB-KW"/>
</dbReference>
<dbReference type="GO" id="GO:0008716">
    <property type="term" value="F:D-alanine-D-alanine ligase activity"/>
    <property type="evidence" value="ECO:0007669"/>
    <property type="project" value="UniProtKB-UniRule"/>
</dbReference>
<dbReference type="GO" id="GO:0046872">
    <property type="term" value="F:metal ion binding"/>
    <property type="evidence" value="ECO:0007669"/>
    <property type="project" value="UniProtKB-KW"/>
</dbReference>
<dbReference type="GO" id="GO:0071555">
    <property type="term" value="P:cell wall organization"/>
    <property type="evidence" value="ECO:0007669"/>
    <property type="project" value="UniProtKB-KW"/>
</dbReference>
<dbReference type="GO" id="GO:0009252">
    <property type="term" value="P:peptidoglycan biosynthetic process"/>
    <property type="evidence" value="ECO:0007669"/>
    <property type="project" value="UniProtKB-UniRule"/>
</dbReference>
<dbReference type="GO" id="GO:0008360">
    <property type="term" value="P:regulation of cell shape"/>
    <property type="evidence" value="ECO:0007669"/>
    <property type="project" value="UniProtKB-KW"/>
</dbReference>
<dbReference type="FunFam" id="3.30.470.20:FF:000008">
    <property type="entry name" value="D-alanine--D-alanine ligase"/>
    <property type="match status" value="1"/>
</dbReference>
<dbReference type="Gene3D" id="3.40.50.20">
    <property type="match status" value="1"/>
</dbReference>
<dbReference type="Gene3D" id="3.30.1490.20">
    <property type="entry name" value="ATP-grasp fold, A domain"/>
    <property type="match status" value="1"/>
</dbReference>
<dbReference type="Gene3D" id="3.30.470.20">
    <property type="entry name" value="ATP-grasp fold, B domain"/>
    <property type="match status" value="1"/>
</dbReference>
<dbReference type="HAMAP" id="MF_00047">
    <property type="entry name" value="Dala_Dala_lig"/>
    <property type="match status" value="1"/>
</dbReference>
<dbReference type="InterPro" id="IPR011761">
    <property type="entry name" value="ATP-grasp"/>
</dbReference>
<dbReference type="InterPro" id="IPR013815">
    <property type="entry name" value="ATP_grasp_subdomain_1"/>
</dbReference>
<dbReference type="InterPro" id="IPR000291">
    <property type="entry name" value="D-Ala_lig_Van_CS"/>
</dbReference>
<dbReference type="InterPro" id="IPR005905">
    <property type="entry name" value="D_ala_D_ala"/>
</dbReference>
<dbReference type="InterPro" id="IPR011095">
    <property type="entry name" value="Dala_Dala_lig_C"/>
</dbReference>
<dbReference type="InterPro" id="IPR011127">
    <property type="entry name" value="Dala_Dala_lig_N"/>
</dbReference>
<dbReference type="InterPro" id="IPR016185">
    <property type="entry name" value="PreATP-grasp_dom_sf"/>
</dbReference>
<dbReference type="NCBIfam" id="TIGR01205">
    <property type="entry name" value="D_ala_D_alaTIGR"/>
    <property type="match status" value="1"/>
</dbReference>
<dbReference type="NCBIfam" id="NF002378">
    <property type="entry name" value="PRK01372.1"/>
    <property type="match status" value="1"/>
</dbReference>
<dbReference type="NCBIfam" id="NF002528">
    <property type="entry name" value="PRK01966.1-4"/>
    <property type="match status" value="1"/>
</dbReference>
<dbReference type="PANTHER" id="PTHR23132">
    <property type="entry name" value="D-ALANINE--D-ALANINE LIGASE"/>
    <property type="match status" value="1"/>
</dbReference>
<dbReference type="PANTHER" id="PTHR23132:SF25">
    <property type="entry name" value="D-ALANINE--D-ALANINE LIGASE A"/>
    <property type="match status" value="1"/>
</dbReference>
<dbReference type="Pfam" id="PF07478">
    <property type="entry name" value="Dala_Dala_lig_C"/>
    <property type="match status" value="1"/>
</dbReference>
<dbReference type="Pfam" id="PF01820">
    <property type="entry name" value="Dala_Dala_lig_N"/>
    <property type="match status" value="1"/>
</dbReference>
<dbReference type="PIRSF" id="PIRSF039102">
    <property type="entry name" value="Ddl/VanB"/>
    <property type="match status" value="1"/>
</dbReference>
<dbReference type="SUPFAM" id="SSF56059">
    <property type="entry name" value="Glutathione synthetase ATP-binding domain-like"/>
    <property type="match status" value="1"/>
</dbReference>
<dbReference type="SUPFAM" id="SSF52440">
    <property type="entry name" value="PreATP-grasp domain"/>
    <property type="match status" value="1"/>
</dbReference>
<dbReference type="PROSITE" id="PS50975">
    <property type="entry name" value="ATP_GRASP"/>
    <property type="match status" value="1"/>
</dbReference>
<dbReference type="PROSITE" id="PS00843">
    <property type="entry name" value="DALA_DALA_LIGASE_1"/>
    <property type="match status" value="1"/>
</dbReference>
<dbReference type="PROSITE" id="PS00844">
    <property type="entry name" value="DALA_DALA_LIGASE_2"/>
    <property type="match status" value="1"/>
</dbReference>
<reference key="1">
    <citation type="submission" date="2006-06" db="EMBL/GenBank/DDBJ databases">
        <title>Complete sequence of chromosome of Mycobacterium sp. MCS.</title>
        <authorList>
            <consortium name="US DOE Joint Genome Institute"/>
            <person name="Copeland A."/>
            <person name="Lucas S."/>
            <person name="Lapidus A."/>
            <person name="Barry K."/>
            <person name="Detter J.C."/>
            <person name="Glavina del Rio T."/>
            <person name="Hammon N."/>
            <person name="Israni S."/>
            <person name="Dalin E."/>
            <person name="Tice H."/>
            <person name="Pitluck S."/>
            <person name="Martinez M."/>
            <person name="Schmutz J."/>
            <person name="Larimer F."/>
            <person name="Land M."/>
            <person name="Hauser L."/>
            <person name="Kyrpides N."/>
            <person name="Kim E."/>
            <person name="Miller C.D."/>
            <person name="Hughes J.E."/>
            <person name="Anderson A.J."/>
            <person name="Sims R.C."/>
            <person name="Richardson P."/>
        </authorList>
    </citation>
    <scope>NUCLEOTIDE SEQUENCE [LARGE SCALE GENOMIC DNA]</scope>
    <source>
        <strain>MCS</strain>
    </source>
</reference>
<gene>
    <name evidence="2" type="primary">ddl</name>
    <name type="ordered locus">Mmcs_1929</name>
</gene>
<accession>Q1BAP6</accession>